<proteinExistence type="inferred from homology"/>
<name>IDGF3_DROSI</name>
<keyword id="KW-0217">Developmental protein</keyword>
<keyword id="KW-1015">Disulfide bond</keyword>
<keyword id="KW-0325">Glycoprotein</keyword>
<keyword id="KW-0964">Secreted</keyword>
<keyword id="KW-0732">Signal</keyword>
<organism>
    <name type="scientific">Drosophila simulans</name>
    <name type="common">Fruit fly</name>
    <dbReference type="NCBI Taxonomy" id="7240"/>
    <lineage>
        <taxon>Eukaryota</taxon>
        <taxon>Metazoa</taxon>
        <taxon>Ecdysozoa</taxon>
        <taxon>Arthropoda</taxon>
        <taxon>Hexapoda</taxon>
        <taxon>Insecta</taxon>
        <taxon>Pterygota</taxon>
        <taxon>Neoptera</taxon>
        <taxon>Endopterygota</taxon>
        <taxon>Diptera</taxon>
        <taxon>Brachycera</taxon>
        <taxon>Muscomorpha</taxon>
        <taxon>Ephydroidea</taxon>
        <taxon>Drosophilidae</taxon>
        <taxon>Drosophila</taxon>
        <taxon>Sophophora</taxon>
    </lineage>
</organism>
<sequence>MSGSLWLSLALSLAVLAQFKVSAAPNLVCFYDSQGSQRQGLAQFSITDIELALQFCTHLVYGYAGVNADNFEMQSINKRLDLEQRHLAQVTSMKERYPHIKFLLSVGGDADTNEGNQYIKLLESGQQGHRRFIESARDLVRRYNFDGLDLALQLPRNKPRKVHGDVGSAWKSFKKFFTGDYIVDTESETHKGQVTALIKDLSAALKQNDLLLSLTVLPNVNSSWYYDAPSIAPSLDFINLGTFDFLTPQRNPEEADFSAPTYEAVGQNRLGHYNLNFQMEHWLLQRVPANKINIGIATYGRTWKMSKDSGDSGMPVVSSTQGPAPAGPQSKQEGLLNWAEICSLMPNPSNSNARGPNAPVKRVVDPTKRYGSYAFRAADENGDHGLWISYDDPDSGSSKAMYARARNLGGVALFDLTQDDFRGQCTGDRFPMLRAIKYRLL</sequence>
<gene>
    <name type="primary">Idgf3</name>
</gene>
<dbReference type="EMBL" id="AF394733">
    <property type="protein sequence ID" value="AAM69665.1"/>
    <property type="molecule type" value="Genomic_DNA"/>
</dbReference>
<dbReference type="SMR" id="Q8MX32"/>
<dbReference type="CAZy" id="GH18">
    <property type="family name" value="Glycoside Hydrolase Family 18"/>
</dbReference>
<dbReference type="GlyCosmos" id="Q8MX32">
    <property type="glycosylation" value="1 site, No reported glycans"/>
</dbReference>
<dbReference type="EnsemblMetazoa" id="FBtr0223968">
    <property type="protein sequence ID" value="FBpp0222460"/>
    <property type="gene ID" value="FBgn0044199"/>
</dbReference>
<dbReference type="EnsemblMetazoa" id="XM_002079604.3">
    <property type="protein sequence ID" value="XP_002079640.1"/>
    <property type="gene ID" value="LOC6732521"/>
</dbReference>
<dbReference type="OrthoDB" id="76388at2759"/>
<dbReference type="Bgee" id="FBgn0044199">
    <property type="expression patterns" value="Expressed in adult organism and 3 other cell types or tissues"/>
</dbReference>
<dbReference type="GO" id="GO:0005576">
    <property type="term" value="C:extracellular region"/>
    <property type="evidence" value="ECO:0007669"/>
    <property type="project" value="UniProtKB-SubCell"/>
</dbReference>
<dbReference type="GO" id="GO:0008061">
    <property type="term" value="F:chitin binding"/>
    <property type="evidence" value="ECO:0007669"/>
    <property type="project" value="InterPro"/>
</dbReference>
<dbReference type="GO" id="GO:0004568">
    <property type="term" value="F:chitinase activity"/>
    <property type="evidence" value="ECO:0007669"/>
    <property type="project" value="TreeGrafter"/>
</dbReference>
<dbReference type="GO" id="GO:0008084">
    <property type="term" value="F:imaginal disc growth factor receptor binding"/>
    <property type="evidence" value="ECO:0000250"/>
    <property type="project" value="UniProtKB"/>
</dbReference>
<dbReference type="GO" id="GO:0005975">
    <property type="term" value="P:carbohydrate metabolic process"/>
    <property type="evidence" value="ECO:0007669"/>
    <property type="project" value="InterPro"/>
</dbReference>
<dbReference type="GO" id="GO:0006032">
    <property type="term" value="P:chitin catabolic process"/>
    <property type="evidence" value="ECO:0007669"/>
    <property type="project" value="TreeGrafter"/>
</dbReference>
<dbReference type="GO" id="GO:0007444">
    <property type="term" value="P:imaginal disc development"/>
    <property type="evidence" value="ECO:0000250"/>
    <property type="project" value="UniProtKB"/>
</dbReference>
<dbReference type="CDD" id="cd02873">
    <property type="entry name" value="GH18_IDGF"/>
    <property type="match status" value="1"/>
</dbReference>
<dbReference type="FunFam" id="3.10.50.10:FF:000007">
    <property type="entry name" value="chitinase-like protein Idgf4"/>
    <property type="match status" value="1"/>
</dbReference>
<dbReference type="FunFam" id="3.20.20.80:FF:000071">
    <property type="entry name" value="Imaginal disc growth factor"/>
    <property type="match status" value="1"/>
</dbReference>
<dbReference type="Gene3D" id="3.10.50.10">
    <property type="match status" value="1"/>
</dbReference>
<dbReference type="Gene3D" id="3.20.20.80">
    <property type="entry name" value="Glycosidases"/>
    <property type="match status" value="1"/>
</dbReference>
<dbReference type="InterPro" id="IPR011583">
    <property type="entry name" value="Chitinase_II/V-like_cat"/>
</dbReference>
<dbReference type="InterPro" id="IPR029070">
    <property type="entry name" value="Chitinase_insertion_sf"/>
</dbReference>
<dbReference type="InterPro" id="IPR001223">
    <property type="entry name" value="Glyco_hydro18_cat"/>
</dbReference>
<dbReference type="InterPro" id="IPR017853">
    <property type="entry name" value="Glycoside_hydrolase_SF"/>
</dbReference>
<dbReference type="InterPro" id="IPR050314">
    <property type="entry name" value="Glycosyl_Hydrlase_18"/>
</dbReference>
<dbReference type="InterPro" id="IPR015520">
    <property type="entry name" value="IDGF"/>
</dbReference>
<dbReference type="PANTHER" id="PTHR11177">
    <property type="entry name" value="CHITINASE"/>
    <property type="match status" value="1"/>
</dbReference>
<dbReference type="PANTHER" id="PTHR11177:SF235">
    <property type="entry name" value="CHITINASE-LIKE PROTEIN IDGF1-RELATED"/>
    <property type="match status" value="1"/>
</dbReference>
<dbReference type="Pfam" id="PF00704">
    <property type="entry name" value="Glyco_hydro_18"/>
    <property type="match status" value="1"/>
</dbReference>
<dbReference type="SMART" id="SM00636">
    <property type="entry name" value="Glyco_18"/>
    <property type="match status" value="1"/>
</dbReference>
<dbReference type="SUPFAM" id="SSF51445">
    <property type="entry name" value="(Trans)glycosidases"/>
    <property type="match status" value="1"/>
</dbReference>
<dbReference type="SUPFAM" id="SSF54556">
    <property type="entry name" value="Chitinase insertion domain"/>
    <property type="match status" value="1"/>
</dbReference>
<dbReference type="PROSITE" id="PS51910">
    <property type="entry name" value="GH18_2"/>
    <property type="match status" value="1"/>
</dbReference>
<reference key="1">
    <citation type="journal article" date="2002" name="Genetics">
        <title>Polymorphism patterns in two tightly linked developmental genes, Idgf1 and Idgf3, of Drosophila melanogaster.</title>
        <authorList>
            <person name="Zurovcova M."/>
            <person name="Ayala F.J."/>
        </authorList>
    </citation>
    <scope>NUCLEOTIDE SEQUENCE [GENOMIC DNA]</scope>
    <source>
        <strain>5F</strain>
    </source>
</reference>
<comment type="function">
    <text evidence="1">Cooperates with insulin-like peptides to stimulate the proliferation, polarization and motility of imaginal disk cells. May act by stabilizing the binding of insulin-like peptides to its receptor through a simultaneous interaction with both molecules to form a multiprotein signaling complex (By similarity).</text>
</comment>
<comment type="subcellular location">
    <subcellularLocation>
        <location evidence="1">Secreted</location>
    </subcellularLocation>
    <text evidence="1">Secreted in hemolymph. It is probably transported to target tissues via hemolymph.</text>
</comment>
<comment type="PTM">
    <text evidence="1">Glycosylated.</text>
</comment>
<comment type="miscellaneous">
    <text>Lacks the typical Glu active site in position 153 that is replaced by a Gln residue, preventing the hydrolase activity. Its precise function remains unclear.</text>
</comment>
<comment type="similarity">
    <text evidence="4">Belongs to the glycosyl hydrolase 18 family. IDGF subfamily.</text>
</comment>
<accession>Q8MX32</accession>
<protein>
    <recommendedName>
        <fullName>Chitinase-like protein Idgf3</fullName>
    </recommendedName>
    <alternativeName>
        <fullName>Imaginal disk growth factor protein 3</fullName>
    </alternativeName>
</protein>
<feature type="signal peptide" evidence="1">
    <location>
        <begin position="1"/>
        <end position="23"/>
    </location>
</feature>
<feature type="chain" id="PRO_0000011985" description="Chitinase-like protein Idgf3">
    <location>
        <begin position="24"/>
        <end position="441"/>
    </location>
</feature>
<feature type="domain" description="GH18" evidence="2">
    <location>
        <begin position="25"/>
        <end position="441"/>
    </location>
</feature>
<feature type="region of interest" description="Disordered" evidence="3">
    <location>
        <begin position="310"/>
        <end position="331"/>
    </location>
</feature>
<feature type="glycosylation site" description="N-linked (GlcNAc...) asparagine" evidence="1">
    <location>
        <position position="221"/>
    </location>
</feature>
<feature type="disulfide bond" evidence="2">
    <location>
        <begin position="29"/>
        <end position="56"/>
    </location>
</feature>
<feature type="disulfide bond" evidence="1">
    <location>
        <begin position="342"/>
        <end position="425"/>
    </location>
</feature>
<evidence type="ECO:0000250" key="1"/>
<evidence type="ECO:0000255" key="2">
    <source>
        <dbReference type="PROSITE-ProRule" id="PRU01258"/>
    </source>
</evidence>
<evidence type="ECO:0000256" key="3">
    <source>
        <dbReference type="SAM" id="MobiDB-lite"/>
    </source>
</evidence>
<evidence type="ECO:0000305" key="4"/>